<organism>
    <name type="scientific">Vibrio vulnificus (strain CMCP6)</name>
    <dbReference type="NCBI Taxonomy" id="216895"/>
    <lineage>
        <taxon>Bacteria</taxon>
        <taxon>Pseudomonadati</taxon>
        <taxon>Pseudomonadota</taxon>
        <taxon>Gammaproteobacteria</taxon>
        <taxon>Vibrionales</taxon>
        <taxon>Vibrionaceae</taxon>
        <taxon>Vibrio</taxon>
    </lineage>
</organism>
<feature type="chain" id="PRO_0000279675" description="HTH-type transcriptional repressor PurR">
    <location>
        <begin position="1"/>
        <end position="334"/>
    </location>
</feature>
<feature type="domain" description="HTH lacI-type" evidence="1">
    <location>
        <begin position="2"/>
        <end position="56"/>
    </location>
</feature>
<feature type="DNA-binding region" description="H-T-H motif" evidence="1">
    <location>
        <begin position="4"/>
        <end position="23"/>
    </location>
</feature>
<feature type="DNA-binding region" evidence="1">
    <location>
        <begin position="48"/>
        <end position="56"/>
    </location>
</feature>
<feature type="binding site" evidence="1">
    <location>
        <position position="73"/>
    </location>
    <ligand>
        <name>hypoxanthine</name>
        <dbReference type="ChEBI" id="CHEBI:17368"/>
    </ligand>
</feature>
<feature type="binding site" evidence="1">
    <location>
        <position position="189"/>
    </location>
    <ligand>
        <name>hypoxanthine</name>
        <dbReference type="ChEBI" id="CHEBI:17368"/>
    </ligand>
</feature>
<feature type="binding site" evidence="1">
    <location>
        <position position="220"/>
    </location>
    <ligand>
        <name>hypoxanthine</name>
        <dbReference type="ChEBI" id="CHEBI:17368"/>
    </ligand>
</feature>
<feature type="binding site" evidence="1">
    <location>
        <position position="274"/>
    </location>
    <ligand>
        <name>hypoxanthine</name>
        <dbReference type="ChEBI" id="CHEBI:17368"/>
    </ligand>
</feature>
<evidence type="ECO:0000255" key="1">
    <source>
        <dbReference type="HAMAP-Rule" id="MF_01277"/>
    </source>
</evidence>
<sequence length="334" mass="37756">MATIKDVARLAGVSTTTVSHVINKTRFVAEATQEKVMKAVDELNYAPSAVARSLKCNTTRTIGMLVTQSTNLFFSEVIDGVESYCYRQGYTLILCNTGGIYEKQRDYIRMLAEKRVDGILVMCSDLTEELREMLDKHADIPKVIMDWGPISSQADKIIDNSEEGGYLATKYLIDNGHTKIACLSGHFEKAACQERIQGFKRAMKEANITLNNEWILEGNFECDTAVMAADKIASWQDRPTAVFCFNDTMALGLMSRLQQLGLRIPEDISVIGYDNIELAEYFSPPLTTIHQPKRRVGKNAFEILLERIKDKEHDKRVFEMHPELVVRDTVKKIN</sequence>
<name>PURR_VIBVU</name>
<dbReference type="EMBL" id="AE016795">
    <property type="protein sequence ID" value="AAO10523.1"/>
    <property type="molecule type" value="Genomic_DNA"/>
</dbReference>
<dbReference type="RefSeq" id="WP_011080017.1">
    <property type="nucleotide sequence ID" value="NC_004459.3"/>
</dbReference>
<dbReference type="SMR" id="Q8DAQ5"/>
<dbReference type="KEGG" id="vvu:VV1_2138"/>
<dbReference type="HOGENOM" id="CLU_037628_6_2_6"/>
<dbReference type="UniPathway" id="UPA00488"/>
<dbReference type="Proteomes" id="UP000002275">
    <property type="component" value="Chromosome 1"/>
</dbReference>
<dbReference type="GO" id="GO:0003700">
    <property type="term" value="F:DNA-binding transcription factor activity"/>
    <property type="evidence" value="ECO:0007669"/>
    <property type="project" value="TreeGrafter"/>
</dbReference>
<dbReference type="GO" id="GO:0000976">
    <property type="term" value="F:transcription cis-regulatory region binding"/>
    <property type="evidence" value="ECO:0007669"/>
    <property type="project" value="TreeGrafter"/>
</dbReference>
<dbReference type="GO" id="GO:0045892">
    <property type="term" value="P:negative regulation of DNA-templated transcription"/>
    <property type="evidence" value="ECO:0007669"/>
    <property type="project" value="UniProtKB-UniRule"/>
</dbReference>
<dbReference type="GO" id="GO:0006164">
    <property type="term" value="P:purine nucleotide biosynthetic process"/>
    <property type="evidence" value="ECO:0007669"/>
    <property type="project" value="UniProtKB-UniPathway"/>
</dbReference>
<dbReference type="CDD" id="cd01392">
    <property type="entry name" value="HTH_LacI"/>
    <property type="match status" value="1"/>
</dbReference>
<dbReference type="CDD" id="cd06275">
    <property type="entry name" value="PBP1_PurR"/>
    <property type="match status" value="1"/>
</dbReference>
<dbReference type="FunFam" id="1.10.260.40:FF:000002">
    <property type="entry name" value="HTH-type transcriptional repressor PurR"/>
    <property type="match status" value="1"/>
</dbReference>
<dbReference type="Gene3D" id="3.40.50.2300">
    <property type="match status" value="2"/>
</dbReference>
<dbReference type="Gene3D" id="1.10.260.40">
    <property type="entry name" value="lambda repressor-like DNA-binding domains"/>
    <property type="match status" value="1"/>
</dbReference>
<dbReference type="HAMAP" id="MF_01277">
    <property type="entry name" value="HTH_type_PurR"/>
    <property type="match status" value="1"/>
</dbReference>
<dbReference type="InterPro" id="IPR000843">
    <property type="entry name" value="HTH_LacI"/>
</dbReference>
<dbReference type="InterPro" id="IPR046335">
    <property type="entry name" value="LacI/GalR-like_sensor"/>
</dbReference>
<dbReference type="InterPro" id="IPR010982">
    <property type="entry name" value="Lambda_DNA-bd_dom_sf"/>
</dbReference>
<dbReference type="InterPro" id="IPR028082">
    <property type="entry name" value="Peripla_BP_I"/>
</dbReference>
<dbReference type="InterPro" id="IPR023588">
    <property type="entry name" value="Tscrpt_reg_HTH_PurR"/>
</dbReference>
<dbReference type="PANTHER" id="PTHR30146:SF148">
    <property type="entry name" value="HTH-TYPE TRANSCRIPTIONAL REPRESSOR PURR-RELATED"/>
    <property type="match status" value="1"/>
</dbReference>
<dbReference type="PANTHER" id="PTHR30146">
    <property type="entry name" value="LACI-RELATED TRANSCRIPTIONAL REPRESSOR"/>
    <property type="match status" value="1"/>
</dbReference>
<dbReference type="Pfam" id="PF00356">
    <property type="entry name" value="LacI"/>
    <property type="match status" value="1"/>
</dbReference>
<dbReference type="Pfam" id="PF13377">
    <property type="entry name" value="Peripla_BP_3"/>
    <property type="match status" value="1"/>
</dbReference>
<dbReference type="PRINTS" id="PR00036">
    <property type="entry name" value="HTHLACI"/>
</dbReference>
<dbReference type="SMART" id="SM00354">
    <property type="entry name" value="HTH_LACI"/>
    <property type="match status" value="1"/>
</dbReference>
<dbReference type="SUPFAM" id="SSF47413">
    <property type="entry name" value="lambda repressor-like DNA-binding domains"/>
    <property type="match status" value="1"/>
</dbReference>
<dbReference type="SUPFAM" id="SSF53822">
    <property type="entry name" value="Periplasmic binding protein-like I"/>
    <property type="match status" value="1"/>
</dbReference>
<dbReference type="PROSITE" id="PS00356">
    <property type="entry name" value="HTH_LACI_1"/>
    <property type="match status" value="1"/>
</dbReference>
<dbReference type="PROSITE" id="PS50932">
    <property type="entry name" value="HTH_LACI_2"/>
    <property type="match status" value="1"/>
</dbReference>
<comment type="function">
    <text evidence="1">Is the main repressor of the genes involved in the de novo synthesis of purine nucleotides, regulating purB, purC, purEK, purF, purHD, purL, purMN and guaBA expression. PurR is allosterically activated to bind its cognate DNA by binding the purine corepressors, hypoxanthine or guanine, thereby effecting transcription repression.</text>
</comment>
<comment type="pathway">
    <text>Purine metabolism; purine nucleotide biosynthesis [regulation].</text>
</comment>
<comment type="subunit">
    <text evidence="1">Homodimer.</text>
</comment>
<comment type="domain">
    <text evidence="1">Consists of two structural and functional domains: an N-terminal DNA-binding domain, approximately the first 60 residues, and a larger C-terminal domain, approximately 280 residues, which imparts the function of corepressor binding and oligomerization.</text>
</comment>
<keyword id="KW-0238">DNA-binding</keyword>
<keyword id="KW-0658">Purine biosynthesis</keyword>
<keyword id="KW-0678">Repressor</keyword>
<keyword id="KW-0804">Transcription</keyword>
<keyword id="KW-0805">Transcription regulation</keyword>
<accession>Q8DAQ5</accession>
<proteinExistence type="inferred from homology"/>
<protein>
    <recommendedName>
        <fullName evidence="1">HTH-type transcriptional repressor PurR</fullName>
    </recommendedName>
    <alternativeName>
        <fullName evidence="1">Pur regulon repressor</fullName>
    </alternativeName>
    <alternativeName>
        <fullName evidence="1">Purine nucleotide synthesis repressor</fullName>
    </alternativeName>
</protein>
<reference key="1">
    <citation type="submission" date="2002-12" db="EMBL/GenBank/DDBJ databases">
        <title>Complete genome sequence of Vibrio vulnificus CMCP6.</title>
        <authorList>
            <person name="Rhee J.H."/>
            <person name="Kim S.Y."/>
            <person name="Chung S.S."/>
            <person name="Kim J.J."/>
            <person name="Moon Y.H."/>
            <person name="Jeong H."/>
            <person name="Choy H.E."/>
        </authorList>
    </citation>
    <scope>NUCLEOTIDE SEQUENCE [LARGE SCALE GENOMIC DNA]</scope>
    <source>
        <strain>CMCP6</strain>
    </source>
</reference>
<gene>
    <name evidence="1" type="primary">purR</name>
    <name type="ordered locus">VV1_2138</name>
</gene>